<proteinExistence type="inferred from homology"/>
<sequence length="93" mass="10447">MTDALGSIDMPDAEDETREKKARKGGKRGKKGPLGRLALFYRQIVAELRKVVWPTRNQLTTYTTVVIVFVVIMIGLVTVIDFGFEKAIKFVFG</sequence>
<feature type="chain" id="PRO_0000104187" description="Protein translocase subunit SecE">
    <location>
        <begin position="1"/>
        <end position="93"/>
    </location>
</feature>
<feature type="transmembrane region" description="Helical" evidence="1">
    <location>
        <begin position="64"/>
        <end position="84"/>
    </location>
</feature>
<feature type="region of interest" description="Disordered" evidence="2">
    <location>
        <begin position="1"/>
        <end position="33"/>
    </location>
</feature>
<feature type="compositionally biased region" description="Basic residues" evidence="2">
    <location>
        <begin position="20"/>
        <end position="33"/>
    </location>
</feature>
<feature type="sequence conflict" description="In Ref. 2; D10468." evidence="3" ref="2">
    <original>R</original>
    <variation>P</variation>
    <location>
        <position position="49"/>
    </location>
</feature>
<feature type="sequence conflict" description="In Ref. 2; D10468." evidence="3" ref="2">
    <original>V</original>
    <variation>L</variation>
    <location>
        <position position="65"/>
    </location>
</feature>
<feature type="sequence conflict" description="In Ref. 2; D10468." evidence="3" ref="2">
    <original>G</original>
    <variation>R</variation>
    <location>
        <position position="75"/>
    </location>
</feature>
<keyword id="KW-1003">Cell membrane</keyword>
<keyword id="KW-0472">Membrane</keyword>
<keyword id="KW-0653">Protein transport</keyword>
<keyword id="KW-0811">Translocation</keyword>
<keyword id="KW-0812">Transmembrane</keyword>
<keyword id="KW-1133">Transmembrane helix</keyword>
<keyword id="KW-0813">Transport</keyword>
<protein>
    <recommendedName>
        <fullName evidence="1">Protein translocase subunit SecE</fullName>
    </recommendedName>
</protein>
<reference key="1">
    <citation type="journal article" date="1996" name="Gene">
        <title>Gene organization in the ada-rplL region of Streptomyces virginiae.</title>
        <authorList>
            <person name="Katayama M."/>
            <person name="Sakai Y."/>
            <person name="Okamoto S."/>
            <person name="Ihara F."/>
            <person name="Nihira T."/>
            <person name="Yamada Y."/>
        </authorList>
    </citation>
    <scope>NUCLEOTIDE SEQUENCE [GENOMIC DNA]</scope>
</reference>
<reference key="2">
    <citation type="journal article" date="1992" name="J. Biol. Chem.">
        <title>Purification and molecular cloning of a butyrolactone autoregulator receptor from Streptomyces virginiae.</title>
        <authorList>
            <person name="Okamoto S."/>
            <person name="Nihirra T."/>
            <person name="Kataoka H."/>
            <person name="Suzuki A."/>
            <person name="Yamada Y."/>
        </authorList>
    </citation>
    <scope>NUCLEOTIDE SEQUENCE [GENOMIC DNA]</scope>
    <source>
        <strain>MAFF10-06014</strain>
    </source>
</reference>
<organism>
    <name type="scientific">Streptomyces virginiae</name>
    <name type="common">Streptomyces cinnamonensis</name>
    <dbReference type="NCBI Taxonomy" id="1961"/>
    <lineage>
        <taxon>Bacteria</taxon>
        <taxon>Bacillati</taxon>
        <taxon>Actinomycetota</taxon>
        <taxon>Actinomycetes</taxon>
        <taxon>Kitasatosporales</taxon>
        <taxon>Streptomycetaceae</taxon>
        <taxon>Streptomyces</taxon>
    </lineage>
</organism>
<gene>
    <name evidence="1" type="primary">secE</name>
</gene>
<name>SECE_STRVG</name>
<accession>P36691</accession>
<evidence type="ECO:0000255" key="1">
    <source>
        <dbReference type="HAMAP-Rule" id="MF_00422"/>
    </source>
</evidence>
<evidence type="ECO:0000256" key="2">
    <source>
        <dbReference type="SAM" id="MobiDB-lite"/>
    </source>
</evidence>
<evidence type="ECO:0000305" key="3"/>
<comment type="function">
    <text evidence="1">Essential subunit of the Sec protein translocation channel SecYEG. Clamps together the 2 halves of SecY. May contact the channel plug during translocation.</text>
</comment>
<comment type="subunit">
    <text evidence="1">Component of the Sec protein translocase complex. Heterotrimer consisting of SecY, SecE and SecG subunits. The heterotrimers can form oligomers, although 1 heterotrimer is thought to be able to translocate proteins. Interacts with the ribosome. Interacts with SecDF, and other proteins may be involved. Interacts with SecA.</text>
</comment>
<comment type="subcellular location">
    <subcellularLocation>
        <location evidence="1">Cell membrane</location>
        <topology evidence="1">Single-pass membrane protein</topology>
    </subcellularLocation>
</comment>
<comment type="similarity">
    <text evidence="1">Belongs to the SecE/SEC61-gamma family.</text>
</comment>
<comment type="sequence caution" evidence="3">
    <conflict type="erroneous initiation">
        <sequence resource="EMBL-CDS" id="BAA09300"/>
    </conflict>
    <text>Extended N-terminus.</text>
</comment>
<dbReference type="EMBL" id="D50624">
    <property type="protein sequence ID" value="BAA09300.1"/>
    <property type="status" value="ALT_INIT"/>
    <property type="molecule type" value="Genomic_DNA"/>
</dbReference>
<dbReference type="EMBL" id="D10468">
    <property type="status" value="NOT_ANNOTATED_CDS"/>
    <property type="molecule type" value="Genomic_DNA"/>
</dbReference>
<dbReference type="RefSeq" id="WP_030388883.1">
    <property type="nucleotide sequence ID" value="NZ_LGUV01000155.1"/>
</dbReference>
<dbReference type="SMR" id="P36691"/>
<dbReference type="GeneID" id="86956275"/>
<dbReference type="eggNOG" id="COG0690">
    <property type="taxonomic scope" value="Bacteria"/>
</dbReference>
<dbReference type="GO" id="GO:0005886">
    <property type="term" value="C:plasma membrane"/>
    <property type="evidence" value="ECO:0007669"/>
    <property type="project" value="UniProtKB-SubCell"/>
</dbReference>
<dbReference type="GO" id="GO:0008320">
    <property type="term" value="F:protein transmembrane transporter activity"/>
    <property type="evidence" value="ECO:0007669"/>
    <property type="project" value="UniProtKB-UniRule"/>
</dbReference>
<dbReference type="GO" id="GO:0065002">
    <property type="term" value="P:intracellular protein transmembrane transport"/>
    <property type="evidence" value="ECO:0007669"/>
    <property type="project" value="UniProtKB-UniRule"/>
</dbReference>
<dbReference type="GO" id="GO:0009306">
    <property type="term" value="P:protein secretion"/>
    <property type="evidence" value="ECO:0007669"/>
    <property type="project" value="UniProtKB-UniRule"/>
</dbReference>
<dbReference type="GO" id="GO:0006605">
    <property type="term" value="P:protein targeting"/>
    <property type="evidence" value="ECO:0007669"/>
    <property type="project" value="UniProtKB-UniRule"/>
</dbReference>
<dbReference type="GO" id="GO:0043952">
    <property type="term" value="P:protein transport by the Sec complex"/>
    <property type="evidence" value="ECO:0007669"/>
    <property type="project" value="UniProtKB-UniRule"/>
</dbReference>
<dbReference type="Gene3D" id="1.20.5.1030">
    <property type="entry name" value="Preprotein translocase secy subunit"/>
    <property type="match status" value="1"/>
</dbReference>
<dbReference type="HAMAP" id="MF_00422">
    <property type="entry name" value="SecE"/>
    <property type="match status" value="1"/>
</dbReference>
<dbReference type="InterPro" id="IPR005807">
    <property type="entry name" value="SecE_bac"/>
</dbReference>
<dbReference type="InterPro" id="IPR038379">
    <property type="entry name" value="SecE_sf"/>
</dbReference>
<dbReference type="InterPro" id="IPR001901">
    <property type="entry name" value="Translocase_SecE/Sec61-g"/>
</dbReference>
<dbReference type="NCBIfam" id="TIGR00964">
    <property type="entry name" value="secE_bact"/>
    <property type="match status" value="1"/>
</dbReference>
<dbReference type="PANTHER" id="PTHR33910">
    <property type="entry name" value="PROTEIN TRANSLOCASE SUBUNIT SECE"/>
    <property type="match status" value="1"/>
</dbReference>
<dbReference type="PANTHER" id="PTHR33910:SF1">
    <property type="entry name" value="PROTEIN TRANSLOCASE SUBUNIT SECE"/>
    <property type="match status" value="1"/>
</dbReference>
<dbReference type="Pfam" id="PF00584">
    <property type="entry name" value="SecE"/>
    <property type="match status" value="1"/>
</dbReference>
<dbReference type="PROSITE" id="PS01067">
    <property type="entry name" value="SECE_SEC61G"/>
    <property type="match status" value="1"/>
</dbReference>